<gene>
    <name evidence="8" type="primary">MIRO2</name>
    <name evidence="12" type="ordered locus">At3g63150</name>
    <name evidence="13" type="ORF">T20O10.250</name>
</gene>
<sequence>MMLGGKSSAGGRTSLRVAVAGDKGTGKSSLISAVASETFPDNVPRVLPPITLPADAFPDYIPITIVDTPSSIDNRIKLIEEFRKADVVLLTYACDQPSTLDRLSSYWLPELRRLEIKAPVIVVGCKLDLRDERSPARLEDIMSPIMKEYREIETCIECSALTLIQVPDVFYFASKAVLHPTFPLFDQEKQCLKPRLRRAVQRIFNLCDHDLDGALNDAELNDFQVNCFGAPLDPVELMGVKKVVQERQPDGVTDLGLTLPGFLFLFSLFIERGRPETAWAILRKCGYNDSLELHAELLPVPAKQSPDQSIELTNEAMDFLSGIFQLYDLDNDGALQPAELDDLFQTAPDSPWLEDPYKEAAEKTPGGSLTINGFLSEWALMTLLDPRKSLANLTYIGYGHDPASTFSVTRKRSVDRKKQRTERNVFQCFVFGPKKSGKSALLDSFLGRKFSNSYKATMGERYAANVIDQPGGSKKTLILREIPEDRVKKFLTNKESLAACDVAVVVYDSSDVYSWRKAREILMEVARRGEERGYGTPCLLVAAKDDLDPYPMSVQESDRVCMELGIDIPVSLSMKLGEPNSLFSRIVSTAENPHMSIPETESGRRSRNIRQLVNSSLLFVSVGTAVGFAGLAAYRAYSARKNA</sequence>
<feature type="chain" id="PRO_0000431716" description="Mitochondrial Rho GTPase 2">
    <location>
        <begin position="1"/>
        <end position="643"/>
    </location>
</feature>
<feature type="topological domain" description="Cytoplasmic" evidence="10">
    <location>
        <begin position="1"/>
        <end position="611"/>
    </location>
</feature>
<feature type="transmembrane region" description="Helical" evidence="1">
    <location>
        <begin position="612"/>
        <end position="632"/>
    </location>
</feature>
<feature type="topological domain" description="Mitochondrial intermembrane" evidence="10">
    <location>
        <begin position="633"/>
        <end position="643"/>
    </location>
</feature>
<feature type="domain" description="Miro 1" evidence="3">
    <location>
        <begin position="12"/>
        <end position="179"/>
    </location>
</feature>
<feature type="domain" description="EF-hand 1" evidence="2">
    <location>
        <begin position="195"/>
        <end position="230"/>
    </location>
</feature>
<feature type="domain" description="EF-hand 2" evidence="2">
    <location>
        <begin position="315"/>
        <end position="350"/>
    </location>
</feature>
<feature type="domain" description="Miro 2" evidence="3">
    <location>
        <begin position="423"/>
        <end position="592"/>
    </location>
</feature>
<feature type="binding site" evidence="10">
    <location>
        <position position="208"/>
    </location>
    <ligand>
        <name>Ca(2+)</name>
        <dbReference type="ChEBI" id="CHEBI:29108"/>
        <label>1</label>
    </ligand>
</feature>
<feature type="binding site" evidence="10">
    <location>
        <position position="210"/>
    </location>
    <ligand>
        <name>Ca(2+)</name>
        <dbReference type="ChEBI" id="CHEBI:29108"/>
        <label>1</label>
    </ligand>
</feature>
<feature type="binding site" evidence="10">
    <location>
        <position position="212"/>
    </location>
    <ligand>
        <name>Ca(2+)</name>
        <dbReference type="ChEBI" id="CHEBI:29108"/>
        <label>1</label>
    </ligand>
</feature>
<feature type="binding site" evidence="10">
    <location>
        <position position="219"/>
    </location>
    <ligand>
        <name>Ca(2+)</name>
        <dbReference type="ChEBI" id="CHEBI:29108"/>
        <label>1</label>
    </ligand>
</feature>
<feature type="binding site" evidence="2">
    <location>
        <position position="328"/>
    </location>
    <ligand>
        <name>Ca(2+)</name>
        <dbReference type="ChEBI" id="CHEBI:29108"/>
        <label>2</label>
    </ligand>
</feature>
<feature type="binding site" evidence="2">
    <location>
        <position position="330"/>
    </location>
    <ligand>
        <name>Ca(2+)</name>
        <dbReference type="ChEBI" id="CHEBI:29108"/>
        <label>2</label>
    </ligand>
</feature>
<feature type="binding site" evidence="2">
    <location>
        <position position="332"/>
    </location>
    <ligand>
        <name>Ca(2+)</name>
        <dbReference type="ChEBI" id="CHEBI:29108"/>
        <label>2</label>
    </ligand>
</feature>
<feature type="binding site" evidence="2">
    <location>
        <position position="339"/>
    </location>
    <ligand>
        <name>Ca(2+)</name>
        <dbReference type="ChEBI" id="CHEBI:29108"/>
        <label>2</label>
    </ligand>
</feature>
<feature type="sequence conflict" description="In Ref. 3; AAL25592/AAM98282." evidence="10" ref="3">
    <original>G</original>
    <variation>R</variation>
    <location>
        <position position="437"/>
    </location>
</feature>
<feature type="sequence conflict" description="In Ref. 3; AAL25592/AAM98282." evidence="10" ref="3">
    <original>M</original>
    <variation>I</variation>
    <location>
        <position position="458"/>
    </location>
</feature>
<reference key="1">
    <citation type="journal article" date="2000" name="Nature">
        <title>Sequence and analysis of chromosome 3 of the plant Arabidopsis thaliana.</title>
        <authorList>
            <person name="Salanoubat M."/>
            <person name="Lemcke K."/>
            <person name="Rieger M."/>
            <person name="Ansorge W."/>
            <person name="Unseld M."/>
            <person name="Fartmann B."/>
            <person name="Valle G."/>
            <person name="Bloecker H."/>
            <person name="Perez-Alonso M."/>
            <person name="Obermaier B."/>
            <person name="Delseny M."/>
            <person name="Boutry M."/>
            <person name="Grivell L.A."/>
            <person name="Mache R."/>
            <person name="Puigdomenech P."/>
            <person name="De Simone V."/>
            <person name="Choisne N."/>
            <person name="Artiguenave F."/>
            <person name="Robert C."/>
            <person name="Brottier P."/>
            <person name="Wincker P."/>
            <person name="Cattolico L."/>
            <person name="Weissenbach J."/>
            <person name="Saurin W."/>
            <person name="Quetier F."/>
            <person name="Schaefer M."/>
            <person name="Mueller-Auer S."/>
            <person name="Gabel C."/>
            <person name="Fuchs M."/>
            <person name="Benes V."/>
            <person name="Wurmbach E."/>
            <person name="Drzonek H."/>
            <person name="Erfle H."/>
            <person name="Jordan N."/>
            <person name="Bangert S."/>
            <person name="Wiedelmann R."/>
            <person name="Kranz H."/>
            <person name="Voss H."/>
            <person name="Holland R."/>
            <person name="Brandt P."/>
            <person name="Nyakatura G."/>
            <person name="Vezzi A."/>
            <person name="D'Angelo M."/>
            <person name="Pallavicini A."/>
            <person name="Toppo S."/>
            <person name="Simionati B."/>
            <person name="Conrad A."/>
            <person name="Hornischer K."/>
            <person name="Kauer G."/>
            <person name="Loehnert T.-H."/>
            <person name="Nordsiek G."/>
            <person name="Reichelt J."/>
            <person name="Scharfe M."/>
            <person name="Schoen O."/>
            <person name="Bargues M."/>
            <person name="Terol J."/>
            <person name="Climent J."/>
            <person name="Navarro P."/>
            <person name="Collado C."/>
            <person name="Perez-Perez A."/>
            <person name="Ottenwaelder B."/>
            <person name="Duchemin D."/>
            <person name="Cooke R."/>
            <person name="Laudie M."/>
            <person name="Berger-Llauro C."/>
            <person name="Purnelle B."/>
            <person name="Masuy D."/>
            <person name="de Haan M."/>
            <person name="Maarse A.C."/>
            <person name="Alcaraz J.-P."/>
            <person name="Cottet A."/>
            <person name="Casacuberta E."/>
            <person name="Monfort A."/>
            <person name="Argiriou A."/>
            <person name="Flores M."/>
            <person name="Liguori R."/>
            <person name="Vitale D."/>
            <person name="Mannhaupt G."/>
            <person name="Haase D."/>
            <person name="Schoof H."/>
            <person name="Rudd S."/>
            <person name="Zaccaria P."/>
            <person name="Mewes H.-W."/>
            <person name="Mayer K.F.X."/>
            <person name="Kaul S."/>
            <person name="Town C.D."/>
            <person name="Koo H.L."/>
            <person name="Tallon L.J."/>
            <person name="Jenkins J."/>
            <person name="Rooney T."/>
            <person name="Rizzo M."/>
            <person name="Walts A."/>
            <person name="Utterback T."/>
            <person name="Fujii C.Y."/>
            <person name="Shea T.P."/>
            <person name="Creasy T.H."/>
            <person name="Haas B."/>
            <person name="Maiti R."/>
            <person name="Wu D."/>
            <person name="Peterson J."/>
            <person name="Van Aken S."/>
            <person name="Pai G."/>
            <person name="Militscher J."/>
            <person name="Sellers P."/>
            <person name="Gill J.E."/>
            <person name="Feldblyum T.V."/>
            <person name="Preuss D."/>
            <person name="Lin X."/>
            <person name="Nierman W.C."/>
            <person name="Salzberg S.L."/>
            <person name="White O."/>
            <person name="Venter J.C."/>
            <person name="Fraser C.M."/>
            <person name="Kaneko T."/>
            <person name="Nakamura Y."/>
            <person name="Sato S."/>
            <person name="Kato T."/>
            <person name="Asamizu E."/>
            <person name="Sasamoto S."/>
            <person name="Kimura T."/>
            <person name="Idesawa K."/>
            <person name="Kawashima K."/>
            <person name="Kishida Y."/>
            <person name="Kiyokawa C."/>
            <person name="Kohara M."/>
            <person name="Matsumoto M."/>
            <person name="Matsuno A."/>
            <person name="Muraki A."/>
            <person name="Nakayama S."/>
            <person name="Nakazaki N."/>
            <person name="Shinpo S."/>
            <person name="Takeuchi C."/>
            <person name="Wada T."/>
            <person name="Watanabe A."/>
            <person name="Yamada M."/>
            <person name="Yasuda M."/>
            <person name="Tabata S."/>
        </authorList>
    </citation>
    <scope>NUCLEOTIDE SEQUENCE [LARGE SCALE GENOMIC DNA]</scope>
    <source>
        <strain>cv. Columbia</strain>
    </source>
</reference>
<reference key="2">
    <citation type="journal article" date="2017" name="Plant J.">
        <title>Araport11: a complete reannotation of the Arabidopsis thaliana reference genome.</title>
        <authorList>
            <person name="Cheng C.Y."/>
            <person name="Krishnakumar V."/>
            <person name="Chan A.P."/>
            <person name="Thibaud-Nissen F."/>
            <person name="Schobel S."/>
            <person name="Town C.D."/>
        </authorList>
    </citation>
    <scope>GENOME REANNOTATION</scope>
    <source>
        <strain>cv. Columbia</strain>
    </source>
</reference>
<reference key="3">
    <citation type="journal article" date="2003" name="Science">
        <title>Empirical analysis of transcriptional activity in the Arabidopsis genome.</title>
        <authorList>
            <person name="Yamada K."/>
            <person name="Lim J."/>
            <person name="Dale J.M."/>
            <person name="Chen H."/>
            <person name="Shinn P."/>
            <person name="Palm C.J."/>
            <person name="Southwick A.M."/>
            <person name="Wu H.C."/>
            <person name="Kim C.J."/>
            <person name="Nguyen M."/>
            <person name="Pham P.K."/>
            <person name="Cheuk R.F."/>
            <person name="Karlin-Newmann G."/>
            <person name="Liu S.X."/>
            <person name="Lam B."/>
            <person name="Sakano H."/>
            <person name="Wu T."/>
            <person name="Yu G."/>
            <person name="Miranda M."/>
            <person name="Quach H.L."/>
            <person name="Tripp M."/>
            <person name="Chang C.H."/>
            <person name="Lee J.M."/>
            <person name="Toriumi M.J."/>
            <person name="Chan M.M."/>
            <person name="Tang C.C."/>
            <person name="Onodera C.S."/>
            <person name="Deng J.M."/>
            <person name="Akiyama K."/>
            <person name="Ansari Y."/>
            <person name="Arakawa T."/>
            <person name="Banh J."/>
            <person name="Banno F."/>
            <person name="Bowser L."/>
            <person name="Brooks S.Y."/>
            <person name="Carninci P."/>
            <person name="Chao Q."/>
            <person name="Choy N."/>
            <person name="Enju A."/>
            <person name="Goldsmith A.D."/>
            <person name="Gurjal M."/>
            <person name="Hansen N.F."/>
            <person name="Hayashizaki Y."/>
            <person name="Johnson-Hopson C."/>
            <person name="Hsuan V.W."/>
            <person name="Iida K."/>
            <person name="Karnes M."/>
            <person name="Khan S."/>
            <person name="Koesema E."/>
            <person name="Ishida J."/>
            <person name="Jiang P.X."/>
            <person name="Jones T."/>
            <person name="Kawai J."/>
            <person name="Kamiya A."/>
            <person name="Meyers C."/>
            <person name="Nakajima M."/>
            <person name="Narusaka M."/>
            <person name="Seki M."/>
            <person name="Sakurai T."/>
            <person name="Satou M."/>
            <person name="Tamse R."/>
            <person name="Vaysberg M."/>
            <person name="Wallender E.K."/>
            <person name="Wong C."/>
            <person name="Yamamura Y."/>
            <person name="Yuan S."/>
            <person name="Shinozaki K."/>
            <person name="Davis R.W."/>
            <person name="Theologis A."/>
            <person name="Ecker J.R."/>
        </authorList>
    </citation>
    <scope>NUCLEOTIDE SEQUENCE [LARGE SCALE MRNA]</scope>
    <source>
        <strain>cv. Columbia</strain>
    </source>
</reference>
<reference key="4">
    <citation type="journal article" date="2006" name="Plant Cell Rep.">
        <title>Novel calcium-binding GTPase (AtCBG) involved in ABA-mediated salt stress signaling in Arabidopsis.</title>
        <authorList>
            <person name="Jayasekaran K."/>
            <person name="Kim K.N."/>
            <person name="Vivekanandan M."/>
            <person name="Shin J.S."/>
            <person name="Ok S.H."/>
        </authorList>
    </citation>
    <scope>FUNCTION</scope>
    <scope>ACTIVITY REGULATION</scope>
    <scope>TISSUE SPECIFICITY</scope>
    <scope>INDUCTION</scope>
    <scope>DISRUPTION PHENOTYPE</scope>
</reference>
<reference key="5">
    <citation type="journal article" date="2008" name="Plant Cell">
        <title>EMB2473/MIRO1, an Arabidopsis Miro GTPase, is required for embryogenesis and influences mitochondrial morphology in pollen.</title>
        <authorList>
            <person name="Yamaoka S."/>
            <person name="Leaver C.J."/>
        </authorList>
    </citation>
    <scope>SUBCELLULAR LOCATION</scope>
    <scope>TISSUE SPECIFICITY</scope>
    <scope>DISRUPTION PHENOTYPE</scope>
</reference>
<reference key="6">
    <citation type="journal article" date="2011" name="PLoS ONE">
        <title>Arabidopsis thaliana MIRO1 and MIRO2 GTPases are unequally redundant in pollen tube growth and fusion of polar nuclei during female gametogenesis.</title>
        <authorList>
            <person name="Sormo C.G."/>
            <person name="Brembu T."/>
            <person name="Winge P."/>
            <person name="Bones A.M."/>
        </authorList>
    </citation>
    <scope>FUNCTION</scope>
</reference>
<dbReference type="EC" id="3.6.5.-" evidence="4"/>
<dbReference type="EMBL" id="AL163816">
    <property type="protein sequence ID" value="CAB87760.1"/>
    <property type="status" value="ALT_SEQ"/>
    <property type="molecule type" value="Genomic_DNA"/>
</dbReference>
<dbReference type="EMBL" id="CP002686">
    <property type="protein sequence ID" value="AEE80441.1"/>
    <property type="molecule type" value="Genomic_DNA"/>
</dbReference>
<dbReference type="EMBL" id="AY058178">
    <property type="protein sequence ID" value="AAL25592.1"/>
    <property type="molecule type" value="mRNA"/>
</dbReference>
<dbReference type="EMBL" id="AY142018">
    <property type="protein sequence ID" value="AAM98282.1"/>
    <property type="molecule type" value="mRNA"/>
</dbReference>
<dbReference type="PIR" id="T48104">
    <property type="entry name" value="T48104"/>
</dbReference>
<dbReference type="RefSeq" id="NP_567139.1">
    <property type="nucleotide sequence ID" value="NM_116180.4"/>
</dbReference>
<dbReference type="SMR" id="F4J0W4"/>
<dbReference type="FunCoup" id="F4J0W4">
    <property type="interactions" value="3594"/>
</dbReference>
<dbReference type="IntAct" id="F4J0W4">
    <property type="interactions" value="2"/>
</dbReference>
<dbReference type="STRING" id="3702.F4J0W4"/>
<dbReference type="iPTMnet" id="F4J0W4"/>
<dbReference type="PaxDb" id="3702-AT3G63150.1"/>
<dbReference type="ProteomicsDB" id="250713"/>
<dbReference type="EnsemblPlants" id="AT3G63150.1">
    <property type="protein sequence ID" value="AT3G63150.1"/>
    <property type="gene ID" value="AT3G63150"/>
</dbReference>
<dbReference type="GeneID" id="825490"/>
<dbReference type="Gramene" id="AT3G63150.1">
    <property type="protein sequence ID" value="AT3G63150.1"/>
    <property type="gene ID" value="AT3G63150"/>
</dbReference>
<dbReference type="KEGG" id="ath:AT3G63150"/>
<dbReference type="Araport" id="AT3G63150"/>
<dbReference type="TAIR" id="AT3G63150">
    <property type="gene designation" value="MIRO2"/>
</dbReference>
<dbReference type="eggNOG" id="KOG1707">
    <property type="taxonomic scope" value="Eukaryota"/>
</dbReference>
<dbReference type="HOGENOM" id="CLU_014255_2_1_1"/>
<dbReference type="InParanoid" id="F4J0W4"/>
<dbReference type="OMA" id="FWFAQKA"/>
<dbReference type="PRO" id="PR:F4J0W4"/>
<dbReference type="Proteomes" id="UP000006548">
    <property type="component" value="Chromosome 3"/>
</dbReference>
<dbReference type="ExpressionAtlas" id="F4J0W4">
    <property type="expression patterns" value="baseline and differential"/>
</dbReference>
<dbReference type="GO" id="GO:0005741">
    <property type="term" value="C:mitochondrial outer membrane"/>
    <property type="evidence" value="ECO:0007669"/>
    <property type="project" value="UniProtKB-SubCell"/>
</dbReference>
<dbReference type="GO" id="GO:0005739">
    <property type="term" value="C:mitochondrion"/>
    <property type="evidence" value="ECO:0000314"/>
    <property type="project" value="TAIR"/>
</dbReference>
<dbReference type="GO" id="GO:0005509">
    <property type="term" value="F:calcium ion binding"/>
    <property type="evidence" value="ECO:0000314"/>
    <property type="project" value="TAIR"/>
</dbReference>
<dbReference type="GO" id="GO:0005525">
    <property type="term" value="F:GTP binding"/>
    <property type="evidence" value="ECO:0007669"/>
    <property type="project" value="UniProtKB-KW"/>
</dbReference>
<dbReference type="GO" id="GO:0003924">
    <property type="term" value="F:GTPase activity"/>
    <property type="evidence" value="ECO:0000314"/>
    <property type="project" value="TAIR"/>
</dbReference>
<dbReference type="GO" id="GO:0007005">
    <property type="term" value="P:mitochondrion organization"/>
    <property type="evidence" value="ECO:0007669"/>
    <property type="project" value="InterPro"/>
</dbReference>
<dbReference type="GO" id="GO:0009737">
    <property type="term" value="P:response to abscisic acid"/>
    <property type="evidence" value="ECO:0000315"/>
    <property type="project" value="TAIR"/>
</dbReference>
<dbReference type="CDD" id="cd01893">
    <property type="entry name" value="Miro1"/>
    <property type="match status" value="1"/>
</dbReference>
<dbReference type="CDD" id="cd01892">
    <property type="entry name" value="Miro2"/>
    <property type="match status" value="1"/>
</dbReference>
<dbReference type="FunFam" id="1.10.238.10:FF:000011">
    <property type="entry name" value="Mitochondrial Rho GTPase"/>
    <property type="match status" value="1"/>
</dbReference>
<dbReference type="FunFam" id="1.10.238.10:FF:000212">
    <property type="entry name" value="Mitochondrial Rho GTPase"/>
    <property type="match status" value="1"/>
</dbReference>
<dbReference type="FunFam" id="3.40.50.300:FF:000553">
    <property type="entry name" value="Mitochondrial Rho GTPase"/>
    <property type="match status" value="1"/>
</dbReference>
<dbReference type="FunFam" id="3.40.50.300:FF:000935">
    <property type="entry name" value="Mitochondrial Rho GTPase"/>
    <property type="match status" value="1"/>
</dbReference>
<dbReference type="Gene3D" id="1.10.238.10">
    <property type="entry name" value="EF-hand"/>
    <property type="match status" value="2"/>
</dbReference>
<dbReference type="Gene3D" id="3.40.50.300">
    <property type="entry name" value="P-loop containing nucleotide triphosphate hydrolases"/>
    <property type="match status" value="2"/>
</dbReference>
<dbReference type="InterPro" id="IPR011992">
    <property type="entry name" value="EF-hand-dom_pair"/>
</dbReference>
<dbReference type="InterPro" id="IPR018247">
    <property type="entry name" value="EF_Hand_1_Ca_BS"/>
</dbReference>
<dbReference type="InterPro" id="IPR013566">
    <property type="entry name" value="EF_hand_assoc_1"/>
</dbReference>
<dbReference type="InterPro" id="IPR013567">
    <property type="entry name" value="EF_hand_assoc_2"/>
</dbReference>
<dbReference type="InterPro" id="IPR002048">
    <property type="entry name" value="EF_hand_dom"/>
</dbReference>
<dbReference type="InterPro" id="IPR021181">
    <property type="entry name" value="Miro"/>
</dbReference>
<dbReference type="InterPro" id="IPR052266">
    <property type="entry name" value="Miro-EF-hand_domain"/>
</dbReference>
<dbReference type="InterPro" id="IPR020860">
    <property type="entry name" value="MIRO_dom"/>
</dbReference>
<dbReference type="InterPro" id="IPR027417">
    <property type="entry name" value="P-loop_NTPase"/>
</dbReference>
<dbReference type="InterPro" id="IPR001806">
    <property type="entry name" value="Small_GTPase"/>
</dbReference>
<dbReference type="PANTHER" id="PTHR46819">
    <property type="entry name" value="EF-HAND CALCIUM-BINDING DOMAIN-CONTAINING PROTEIN 7"/>
    <property type="match status" value="1"/>
</dbReference>
<dbReference type="PANTHER" id="PTHR46819:SF1">
    <property type="entry name" value="EF-HAND CALCIUM-BINDING DOMAIN-CONTAINING PROTEIN 7"/>
    <property type="match status" value="1"/>
</dbReference>
<dbReference type="Pfam" id="PF08355">
    <property type="entry name" value="EF_assoc_1"/>
    <property type="match status" value="1"/>
</dbReference>
<dbReference type="Pfam" id="PF08356">
    <property type="entry name" value="EF_assoc_2"/>
    <property type="match status" value="1"/>
</dbReference>
<dbReference type="Pfam" id="PF00071">
    <property type="entry name" value="Ras"/>
    <property type="match status" value="2"/>
</dbReference>
<dbReference type="PIRSF" id="PIRSF037488">
    <property type="entry name" value="Mt_Rho_GTPase"/>
    <property type="match status" value="1"/>
</dbReference>
<dbReference type="PRINTS" id="PR00449">
    <property type="entry name" value="RASTRNSFRMNG"/>
</dbReference>
<dbReference type="SMART" id="SM00175">
    <property type="entry name" value="RAB"/>
    <property type="match status" value="1"/>
</dbReference>
<dbReference type="SMART" id="SM00174">
    <property type="entry name" value="RHO"/>
    <property type="match status" value="1"/>
</dbReference>
<dbReference type="SUPFAM" id="SSF47473">
    <property type="entry name" value="EF-hand"/>
    <property type="match status" value="1"/>
</dbReference>
<dbReference type="SUPFAM" id="SSF52540">
    <property type="entry name" value="P-loop containing nucleoside triphosphate hydrolases"/>
    <property type="match status" value="2"/>
</dbReference>
<dbReference type="PROSITE" id="PS00018">
    <property type="entry name" value="EF_HAND_1"/>
    <property type="match status" value="1"/>
</dbReference>
<dbReference type="PROSITE" id="PS50222">
    <property type="entry name" value="EF_HAND_2"/>
    <property type="match status" value="2"/>
</dbReference>
<dbReference type="PROSITE" id="PS51423">
    <property type="entry name" value="MIRO"/>
    <property type="match status" value="2"/>
</dbReference>
<comment type="function">
    <text evidence="4 6">Calcium-binding mitochondrial GTPase involved in calcium signaling during salt stress response (PubMed:16832621). May play a role in the progression of embryonic cell division, development of haploid male and female gametes, and pollen tube growth (PubMed:21494602).</text>
</comment>
<comment type="activity regulation">
    <text evidence="4">Activated by calcium.</text>
</comment>
<comment type="subcellular location">
    <subcellularLocation>
        <location evidence="11">Mitochondrion outer membrane</location>
        <topology evidence="10">Single-pass type IV membrane protein</topology>
    </subcellularLocation>
</comment>
<comment type="tissue specificity">
    <text evidence="4 5">Expressed roots, rosette and cauline leaves, stems, flowers and siliques.</text>
</comment>
<comment type="induction">
    <text evidence="4">By abscisic acid (ABA) and NaCl.</text>
</comment>
<comment type="disruption phenotype">
    <text evidence="4 5">No visible phenotype under normal growth conditions (PubMed:16832621, PubMed:18344283). Mutant plants show increased sensitivity to ABA, NaCl or mannitol during germination (PubMed:16832621).</text>
</comment>
<comment type="similarity">
    <text evidence="3 10">Belongs to the mitochondrial Rho GTPase family.</text>
</comment>
<comment type="sequence caution" evidence="10">
    <conflict type="erroneous gene model prediction">
        <sequence resource="EMBL-CDS" id="CAB87760"/>
    </conflict>
</comment>
<protein>
    <recommendedName>
        <fullName>Mitochondrial Rho GTPase 2</fullName>
        <shortName evidence="9">AtMIRO2</shortName>
        <ecNumber evidence="4">3.6.5.-</ecNumber>
    </recommendedName>
    <alternativeName>
        <fullName evidence="7">Calcium-binding GTPase</fullName>
        <shortName evidence="7">AtCBG</shortName>
    </alternativeName>
    <alternativeName>
        <fullName evidence="10">Miro-related GTPase 2</fullName>
    </alternativeName>
</protein>
<organism>
    <name type="scientific">Arabidopsis thaliana</name>
    <name type="common">Mouse-ear cress</name>
    <dbReference type="NCBI Taxonomy" id="3702"/>
    <lineage>
        <taxon>Eukaryota</taxon>
        <taxon>Viridiplantae</taxon>
        <taxon>Streptophyta</taxon>
        <taxon>Embryophyta</taxon>
        <taxon>Tracheophyta</taxon>
        <taxon>Spermatophyta</taxon>
        <taxon>Magnoliopsida</taxon>
        <taxon>eudicotyledons</taxon>
        <taxon>Gunneridae</taxon>
        <taxon>Pentapetalae</taxon>
        <taxon>rosids</taxon>
        <taxon>malvids</taxon>
        <taxon>Brassicales</taxon>
        <taxon>Brassicaceae</taxon>
        <taxon>Camelineae</taxon>
        <taxon>Arabidopsis</taxon>
    </lineage>
</organism>
<name>MIRO2_ARATH</name>
<accession>F4J0W4</accession>
<accession>Q93Z33</accession>
<accession>Q9LYA8</accession>
<keyword id="KW-0106">Calcium</keyword>
<keyword id="KW-0342">GTP-binding</keyword>
<keyword id="KW-0378">Hydrolase</keyword>
<keyword id="KW-0472">Membrane</keyword>
<keyword id="KW-0479">Metal-binding</keyword>
<keyword id="KW-0496">Mitochondrion</keyword>
<keyword id="KW-1000">Mitochondrion outer membrane</keyword>
<keyword id="KW-0547">Nucleotide-binding</keyword>
<keyword id="KW-1185">Reference proteome</keyword>
<keyword id="KW-0677">Repeat</keyword>
<keyword id="KW-0346">Stress response</keyword>
<keyword id="KW-0812">Transmembrane</keyword>
<keyword id="KW-1133">Transmembrane helix</keyword>
<proteinExistence type="evidence at transcript level"/>
<evidence type="ECO:0000255" key="1"/>
<evidence type="ECO:0000255" key="2">
    <source>
        <dbReference type="PROSITE-ProRule" id="PRU00448"/>
    </source>
</evidence>
<evidence type="ECO:0000255" key="3">
    <source>
        <dbReference type="PROSITE-ProRule" id="PRU00757"/>
    </source>
</evidence>
<evidence type="ECO:0000269" key="4">
    <source>
    </source>
</evidence>
<evidence type="ECO:0000269" key="5">
    <source>
    </source>
</evidence>
<evidence type="ECO:0000269" key="6">
    <source>
    </source>
</evidence>
<evidence type="ECO:0000303" key="7">
    <source>
    </source>
</evidence>
<evidence type="ECO:0000303" key="8">
    <source>
    </source>
</evidence>
<evidence type="ECO:0000303" key="9">
    <source>
    </source>
</evidence>
<evidence type="ECO:0000305" key="10"/>
<evidence type="ECO:0000305" key="11">
    <source>
    </source>
</evidence>
<evidence type="ECO:0000312" key="12">
    <source>
        <dbReference type="Araport" id="AT3G63150"/>
    </source>
</evidence>
<evidence type="ECO:0000312" key="13">
    <source>
        <dbReference type="EMBL" id="CAB87760.1"/>
    </source>
</evidence>